<reference key="1">
    <citation type="journal article" date="1993" name="FEBS Lett.">
        <title>Pectate lyase from Bacillus subtilis: molecular characterization of the gene, and properties of the cloned enzyme.</title>
        <authorList>
            <person name="Nasser W."/>
            <person name="Awade A.C."/>
            <person name="Reverchon S."/>
            <person name="Robert-Baudouy J."/>
        </authorList>
    </citation>
    <scope>NUCLEOTIDE SEQUENCE [GENOMIC DNA]</scope>
    <scope>PROTEIN SEQUENCE OF 22-48</scope>
    <source>
        <strain>168 / SO113</strain>
    </source>
</reference>
<reference key="2">
    <citation type="journal article" date="1997" name="Gene">
        <title>Cloning and sequencing of a 35.7 kb in the 70 degree-73 degree region of the Bacillus subtilis genome reveal genes for a new two-component system, three spore germination proteins, an iron uptake system and a general stress response protein.</title>
        <authorList>
            <person name="Yamamoto H."/>
            <person name="Uchiyama S."/>
            <person name="Nugroho F.A."/>
            <person name="Sekiguchi J."/>
        </authorList>
    </citation>
    <scope>NUCLEOTIDE SEQUENCE [GENOMIC DNA]</scope>
    <source>
        <strain>168 / AC327</strain>
    </source>
</reference>
<reference key="3">
    <citation type="journal article" date="1997" name="Nature">
        <title>The complete genome sequence of the Gram-positive bacterium Bacillus subtilis.</title>
        <authorList>
            <person name="Kunst F."/>
            <person name="Ogasawara N."/>
            <person name="Moszer I."/>
            <person name="Albertini A.M."/>
            <person name="Alloni G."/>
            <person name="Azevedo V."/>
            <person name="Bertero M.G."/>
            <person name="Bessieres P."/>
            <person name="Bolotin A."/>
            <person name="Borchert S."/>
            <person name="Borriss R."/>
            <person name="Boursier L."/>
            <person name="Brans A."/>
            <person name="Braun M."/>
            <person name="Brignell S.C."/>
            <person name="Bron S."/>
            <person name="Brouillet S."/>
            <person name="Bruschi C.V."/>
            <person name="Caldwell B."/>
            <person name="Capuano V."/>
            <person name="Carter N.M."/>
            <person name="Choi S.-K."/>
            <person name="Codani J.-J."/>
            <person name="Connerton I.F."/>
            <person name="Cummings N.J."/>
            <person name="Daniel R.A."/>
            <person name="Denizot F."/>
            <person name="Devine K.M."/>
            <person name="Duesterhoeft A."/>
            <person name="Ehrlich S.D."/>
            <person name="Emmerson P.T."/>
            <person name="Entian K.-D."/>
            <person name="Errington J."/>
            <person name="Fabret C."/>
            <person name="Ferrari E."/>
            <person name="Foulger D."/>
            <person name="Fritz C."/>
            <person name="Fujita M."/>
            <person name="Fujita Y."/>
            <person name="Fuma S."/>
            <person name="Galizzi A."/>
            <person name="Galleron N."/>
            <person name="Ghim S.-Y."/>
            <person name="Glaser P."/>
            <person name="Goffeau A."/>
            <person name="Golightly E.J."/>
            <person name="Grandi G."/>
            <person name="Guiseppi G."/>
            <person name="Guy B.J."/>
            <person name="Haga K."/>
            <person name="Haiech J."/>
            <person name="Harwood C.R."/>
            <person name="Henaut A."/>
            <person name="Hilbert H."/>
            <person name="Holsappel S."/>
            <person name="Hosono S."/>
            <person name="Hullo M.-F."/>
            <person name="Itaya M."/>
            <person name="Jones L.-M."/>
            <person name="Joris B."/>
            <person name="Karamata D."/>
            <person name="Kasahara Y."/>
            <person name="Klaerr-Blanchard M."/>
            <person name="Klein C."/>
            <person name="Kobayashi Y."/>
            <person name="Koetter P."/>
            <person name="Koningstein G."/>
            <person name="Krogh S."/>
            <person name="Kumano M."/>
            <person name="Kurita K."/>
            <person name="Lapidus A."/>
            <person name="Lardinois S."/>
            <person name="Lauber J."/>
            <person name="Lazarevic V."/>
            <person name="Lee S.-M."/>
            <person name="Levine A."/>
            <person name="Liu H."/>
            <person name="Masuda S."/>
            <person name="Mauel C."/>
            <person name="Medigue C."/>
            <person name="Medina N."/>
            <person name="Mellado R.P."/>
            <person name="Mizuno M."/>
            <person name="Moestl D."/>
            <person name="Nakai S."/>
            <person name="Noback M."/>
            <person name="Noone D."/>
            <person name="O'Reilly M."/>
            <person name="Ogawa K."/>
            <person name="Ogiwara A."/>
            <person name="Oudega B."/>
            <person name="Park S.-H."/>
            <person name="Parro V."/>
            <person name="Pohl T.M."/>
            <person name="Portetelle D."/>
            <person name="Porwollik S."/>
            <person name="Prescott A.M."/>
            <person name="Presecan E."/>
            <person name="Pujic P."/>
            <person name="Purnelle B."/>
            <person name="Rapoport G."/>
            <person name="Rey M."/>
            <person name="Reynolds S."/>
            <person name="Rieger M."/>
            <person name="Rivolta C."/>
            <person name="Rocha E."/>
            <person name="Roche B."/>
            <person name="Rose M."/>
            <person name="Sadaie Y."/>
            <person name="Sato T."/>
            <person name="Scanlan E."/>
            <person name="Schleich S."/>
            <person name="Schroeter R."/>
            <person name="Scoffone F."/>
            <person name="Sekiguchi J."/>
            <person name="Sekowska A."/>
            <person name="Seror S.J."/>
            <person name="Serror P."/>
            <person name="Shin B.-S."/>
            <person name="Soldo B."/>
            <person name="Sorokin A."/>
            <person name="Tacconi E."/>
            <person name="Takagi T."/>
            <person name="Takahashi H."/>
            <person name="Takemaru K."/>
            <person name="Takeuchi M."/>
            <person name="Tamakoshi A."/>
            <person name="Tanaka T."/>
            <person name="Terpstra P."/>
            <person name="Tognoni A."/>
            <person name="Tosato V."/>
            <person name="Uchiyama S."/>
            <person name="Vandenbol M."/>
            <person name="Vannier F."/>
            <person name="Vassarotti A."/>
            <person name="Viari A."/>
            <person name="Wambutt R."/>
            <person name="Wedler E."/>
            <person name="Wedler H."/>
            <person name="Weitzenegger T."/>
            <person name="Winters P."/>
            <person name="Wipat A."/>
            <person name="Yamamoto H."/>
            <person name="Yamane K."/>
            <person name="Yasumoto K."/>
            <person name="Yata K."/>
            <person name="Yoshida K."/>
            <person name="Yoshikawa H.-F."/>
            <person name="Zumstein E."/>
            <person name="Yoshikawa H."/>
            <person name="Danchin A."/>
        </authorList>
    </citation>
    <scope>NUCLEOTIDE SEQUENCE [LARGE SCALE GENOMIC DNA]</scope>
    <source>
        <strain>168</strain>
    </source>
</reference>
<reference key="4">
    <citation type="journal article" date="2000" name="Microbiology">
        <title>Proteome analysis of Bacillus subtilis extracellular proteins: a two-dimensional protein electrophoretic study.</title>
        <authorList>
            <person name="Hirose I."/>
            <person name="Sano K."/>
            <person name="Shioda I."/>
            <person name="Kumano M."/>
            <person name="Nakamura K."/>
            <person name="Yamane K."/>
        </authorList>
    </citation>
    <scope>PROTEIN SEQUENCE OF 22-32</scope>
    <scope>SUBCELLULAR LOCATION</scope>
    <source>
        <strain>168</strain>
    </source>
</reference>
<reference key="5">
    <citation type="journal article" date="1990" name="Biochimie">
        <title>Purification and characterization of extracellular pectate lyase from Bacillus subtilis.</title>
        <authorList>
            <person name="Nasser W."/>
            <person name="Chalet F."/>
            <person name="Robert-Baudouy J."/>
        </authorList>
    </citation>
    <scope>CHARACTERIZATION</scope>
    <source>
        <strain>168 / SO113</strain>
    </source>
</reference>
<reference key="6">
    <citation type="journal article" date="2003" name="Mol. Microbiol.">
        <title>Identification of additional TnrA-regulated genes of Bacillus subtilis associated with a TnrA box.</title>
        <authorList>
            <person name="Yoshida K."/>
            <person name="Yamaguchi H."/>
            <person name="Kinehara M."/>
            <person name="Ohki Y.-H."/>
            <person name="Nakaura Y."/>
            <person name="Fujita Y."/>
        </authorList>
    </citation>
    <scope>REGULATION BY TNRA</scope>
</reference>
<reference key="7">
    <citation type="journal article" date="1994" name="Nat. Struct. Biol.">
        <title>The structure of Bacillus subtilis pectate lyase in complex with calcium.</title>
        <authorList>
            <person name="Pickersgill R."/>
            <person name="Jenkins J."/>
            <person name="Harris G."/>
            <person name="Nasser W."/>
            <person name="Robert-Baudouy J."/>
        </authorList>
    </citation>
    <scope>X-RAY CRYSTALLOGRAPHY (1.80 ANGSTROMS) IN COMPLEX WITH CALCIUM</scope>
</reference>
<reference key="8">
    <citation type="submission" date="1998-07" db="PDB data bank">
        <authorList>
            <person name="Pickersgill R."/>
            <person name="Worboys K."/>
            <person name="Scott M."/>
            <person name="Cummings N."/>
            <person name="Cooper A."/>
            <person name="Jenkins J."/>
            <person name="Smith D."/>
        </authorList>
    </citation>
    <scope>X-RAY CRYSTALLOGRAPHY (1.8 ANGSTROMS) IN COMPLEX WITH CALCIUM</scope>
</reference>
<protein>
    <recommendedName>
        <fullName>Pectate lyase</fullName>
        <shortName>PL</shortName>
        <ecNumber>4.2.2.2</ecNumber>
    </recommendedName>
</protein>
<evidence type="ECO:0000256" key="1">
    <source>
        <dbReference type="SAM" id="MobiDB-lite"/>
    </source>
</evidence>
<evidence type="ECO:0000269" key="2">
    <source>
    </source>
</evidence>
<evidence type="ECO:0000269" key="3">
    <source>
    </source>
</evidence>
<evidence type="ECO:0000269" key="4">
    <source>
    </source>
</evidence>
<evidence type="ECO:0000269" key="5">
    <source ref="8"/>
</evidence>
<evidence type="ECO:0000305" key="6"/>
<evidence type="ECO:0000305" key="7">
    <source>
    </source>
</evidence>
<evidence type="ECO:0007829" key="8">
    <source>
        <dbReference type="PDB" id="2O04"/>
    </source>
</evidence>
<evidence type="ECO:0007829" key="9">
    <source>
        <dbReference type="PDB" id="2O1D"/>
    </source>
</evidence>
<evidence type="ECO:0007829" key="10">
    <source>
        <dbReference type="PDB" id="5AMV"/>
    </source>
</evidence>
<organism>
    <name type="scientific">Bacillus subtilis (strain 168)</name>
    <dbReference type="NCBI Taxonomy" id="224308"/>
    <lineage>
        <taxon>Bacteria</taxon>
        <taxon>Bacillati</taxon>
        <taxon>Bacillota</taxon>
        <taxon>Bacilli</taxon>
        <taxon>Bacillales</taxon>
        <taxon>Bacillaceae</taxon>
        <taxon>Bacillus</taxon>
    </lineage>
</organism>
<gene>
    <name type="primary">pel</name>
    <name type="ordered locus">BSU07560</name>
</gene>
<dbReference type="EC" id="4.2.2.2"/>
<dbReference type="EMBL" id="X74880">
    <property type="protein sequence ID" value="CAA52866.1"/>
    <property type="molecule type" value="Genomic_DNA"/>
</dbReference>
<dbReference type="EMBL" id="D86417">
    <property type="protein sequence ID" value="BAA22313.1"/>
    <property type="molecule type" value="Genomic_DNA"/>
</dbReference>
<dbReference type="EMBL" id="AL009126">
    <property type="protein sequence ID" value="CAB12585.1"/>
    <property type="molecule type" value="Genomic_DNA"/>
</dbReference>
<dbReference type="PIR" id="S39459">
    <property type="entry name" value="S39459"/>
</dbReference>
<dbReference type="RefSeq" id="WP_003244025.1">
    <property type="nucleotide sequence ID" value="NZ_OZ025638.1"/>
</dbReference>
<dbReference type="PDB" id="1BN8">
    <property type="method" value="X-ray"/>
    <property type="resolution" value="1.80 A"/>
    <property type="chains" value="A=1-420"/>
</dbReference>
<dbReference type="PDB" id="2BSP">
    <property type="method" value="X-ray"/>
    <property type="resolution" value="1.80 A"/>
    <property type="chains" value="A=1-420"/>
</dbReference>
<dbReference type="PDB" id="2NZM">
    <property type="method" value="X-ray"/>
    <property type="resolution" value="1.80 A"/>
    <property type="chains" value="A=22-420"/>
</dbReference>
<dbReference type="PDB" id="2O04">
    <property type="method" value="X-ray"/>
    <property type="resolution" value="1.70 A"/>
    <property type="chains" value="A=22-420"/>
</dbReference>
<dbReference type="PDB" id="2O0V">
    <property type="method" value="X-ray"/>
    <property type="resolution" value="1.90 A"/>
    <property type="chains" value="A=22-420"/>
</dbReference>
<dbReference type="PDB" id="2O0W">
    <property type="method" value="X-ray"/>
    <property type="resolution" value="1.90 A"/>
    <property type="chains" value="A=22-420"/>
</dbReference>
<dbReference type="PDB" id="2O17">
    <property type="method" value="X-ray"/>
    <property type="resolution" value="2.30 A"/>
    <property type="chains" value="A=22-420"/>
</dbReference>
<dbReference type="PDB" id="2O1D">
    <property type="method" value="X-ray"/>
    <property type="resolution" value="2.00 A"/>
    <property type="chains" value="A=22-420"/>
</dbReference>
<dbReference type="PDB" id="3KRG">
    <property type="method" value="X-ray"/>
    <property type="resolution" value="1.90 A"/>
    <property type="chains" value="A=22-420"/>
</dbReference>
<dbReference type="PDB" id="5AMV">
    <property type="method" value="X-ray"/>
    <property type="resolution" value="1.57 A"/>
    <property type="chains" value="A=22-420"/>
</dbReference>
<dbReference type="PDB" id="5X2I">
    <property type="method" value="X-ray"/>
    <property type="resolution" value="2.05 A"/>
    <property type="chains" value="A=22-420"/>
</dbReference>
<dbReference type="PDBsum" id="1BN8"/>
<dbReference type="PDBsum" id="2BSP"/>
<dbReference type="PDBsum" id="2NZM"/>
<dbReference type="PDBsum" id="2O04"/>
<dbReference type="PDBsum" id="2O0V"/>
<dbReference type="PDBsum" id="2O0W"/>
<dbReference type="PDBsum" id="2O17"/>
<dbReference type="PDBsum" id="2O1D"/>
<dbReference type="PDBsum" id="3KRG"/>
<dbReference type="PDBsum" id="5AMV"/>
<dbReference type="PDBsum" id="5X2I"/>
<dbReference type="SMR" id="P39116"/>
<dbReference type="FunCoup" id="P39116">
    <property type="interactions" value="88"/>
</dbReference>
<dbReference type="STRING" id="224308.BSU07560"/>
<dbReference type="CAZy" id="PL1">
    <property type="family name" value="Polysaccharide Lyase Family 1"/>
</dbReference>
<dbReference type="PaxDb" id="224308-BSU07560"/>
<dbReference type="EnsemblBacteria" id="CAB12585">
    <property type="protein sequence ID" value="CAB12585"/>
    <property type="gene ID" value="BSU_07560"/>
</dbReference>
<dbReference type="GeneID" id="936113"/>
<dbReference type="KEGG" id="bsu:BSU07560"/>
<dbReference type="PATRIC" id="fig|224308.179.peg.821"/>
<dbReference type="eggNOG" id="COG3866">
    <property type="taxonomic scope" value="Bacteria"/>
</dbReference>
<dbReference type="InParanoid" id="P39116"/>
<dbReference type="OrthoDB" id="148600at2"/>
<dbReference type="BioCyc" id="BSUB:BSU07560-MONOMER"/>
<dbReference type="BRENDA" id="4.2.2.2">
    <property type="organism ID" value="658"/>
</dbReference>
<dbReference type="UniPathway" id="UPA00545">
    <property type="reaction ID" value="UER00824"/>
</dbReference>
<dbReference type="EvolutionaryTrace" id="P39116"/>
<dbReference type="Proteomes" id="UP000001570">
    <property type="component" value="Chromosome"/>
</dbReference>
<dbReference type="GO" id="GO:0005576">
    <property type="term" value="C:extracellular region"/>
    <property type="evidence" value="ECO:0007669"/>
    <property type="project" value="UniProtKB-SubCell"/>
</dbReference>
<dbReference type="GO" id="GO:0046872">
    <property type="term" value="F:metal ion binding"/>
    <property type="evidence" value="ECO:0007669"/>
    <property type="project" value="UniProtKB-KW"/>
</dbReference>
<dbReference type="GO" id="GO:0030570">
    <property type="term" value="F:pectate lyase activity"/>
    <property type="evidence" value="ECO:0007669"/>
    <property type="project" value="UniProtKB-EC"/>
</dbReference>
<dbReference type="GO" id="GO:0045490">
    <property type="term" value="P:pectin catabolic process"/>
    <property type="evidence" value="ECO:0007669"/>
    <property type="project" value="UniProtKB-UniPathway"/>
</dbReference>
<dbReference type="Gene3D" id="2.160.20.10">
    <property type="entry name" value="Single-stranded right-handed beta-helix, Pectin lyase-like"/>
    <property type="match status" value="1"/>
</dbReference>
<dbReference type="InterPro" id="IPR002022">
    <property type="entry name" value="Pec_lyase"/>
</dbReference>
<dbReference type="InterPro" id="IPR012334">
    <property type="entry name" value="Pectin_lyas_fold"/>
</dbReference>
<dbReference type="InterPro" id="IPR011050">
    <property type="entry name" value="Pectin_lyase_fold/virulence"/>
</dbReference>
<dbReference type="InterPro" id="IPR045032">
    <property type="entry name" value="PEL"/>
</dbReference>
<dbReference type="PANTHER" id="PTHR31683">
    <property type="entry name" value="PECTATE LYASE 18-RELATED"/>
    <property type="match status" value="1"/>
</dbReference>
<dbReference type="PANTHER" id="PTHR31683:SF18">
    <property type="entry name" value="PECTATE LYASE 21-RELATED"/>
    <property type="match status" value="1"/>
</dbReference>
<dbReference type="Pfam" id="PF00544">
    <property type="entry name" value="Pectate_lyase_4"/>
    <property type="match status" value="1"/>
</dbReference>
<dbReference type="SMART" id="SM00656">
    <property type="entry name" value="Amb_all"/>
    <property type="match status" value="1"/>
</dbReference>
<dbReference type="SUPFAM" id="SSF51126">
    <property type="entry name" value="Pectin lyase-like"/>
    <property type="match status" value="1"/>
</dbReference>
<feature type="signal peptide" evidence="2 4">
    <location>
        <begin position="1"/>
        <end position="21"/>
    </location>
</feature>
<feature type="chain" id="PRO_0000024859" description="Pectate lyase">
    <location>
        <begin position="22"/>
        <end position="420"/>
    </location>
</feature>
<feature type="region of interest" description="Disordered" evidence="1">
    <location>
        <begin position="117"/>
        <end position="139"/>
    </location>
</feature>
<feature type="compositionally biased region" description="Basic and acidic residues" evidence="1">
    <location>
        <begin position="119"/>
        <end position="132"/>
    </location>
</feature>
<feature type="active site" evidence="7">
    <location>
        <position position="300"/>
    </location>
</feature>
<feature type="binding site" evidence="3 5">
    <location>
        <position position="205"/>
    </location>
    <ligand>
        <name>Ca(2+)</name>
        <dbReference type="ChEBI" id="CHEBI:29108"/>
    </ligand>
</feature>
<feature type="binding site" evidence="3 5">
    <location>
        <position position="244"/>
    </location>
    <ligand>
        <name>Ca(2+)</name>
        <dbReference type="ChEBI" id="CHEBI:29108"/>
    </ligand>
</feature>
<feature type="binding site" evidence="3 5">
    <location>
        <position position="248"/>
    </location>
    <ligand>
        <name>Ca(2+)</name>
        <dbReference type="ChEBI" id="CHEBI:29108"/>
    </ligand>
</feature>
<feature type="helix" evidence="10">
    <location>
        <begin position="24"/>
        <end position="26"/>
    </location>
</feature>
<feature type="helix" evidence="10">
    <location>
        <begin position="35"/>
        <end position="37"/>
    </location>
</feature>
<feature type="turn" evidence="10">
    <location>
        <begin position="44"/>
        <end position="47"/>
    </location>
</feature>
<feature type="helix" evidence="10">
    <location>
        <begin position="50"/>
        <end position="52"/>
    </location>
</feature>
<feature type="strand" evidence="10">
    <location>
        <begin position="53"/>
        <end position="56"/>
    </location>
</feature>
<feature type="helix" evidence="10">
    <location>
        <begin position="59"/>
        <end position="66"/>
    </location>
</feature>
<feature type="strand" evidence="10">
    <location>
        <begin position="75"/>
        <end position="79"/>
    </location>
</feature>
<feature type="strand" evidence="10">
    <location>
        <begin position="81"/>
        <end position="87"/>
    </location>
</feature>
<feature type="helix" evidence="10">
    <location>
        <begin position="96"/>
        <end position="99"/>
    </location>
</feature>
<feature type="helix" evidence="10">
    <location>
        <begin position="106"/>
        <end position="113"/>
    </location>
</feature>
<feature type="helix" evidence="10">
    <location>
        <begin position="115"/>
        <end position="118"/>
    </location>
</feature>
<feature type="helix" evidence="10">
    <location>
        <begin position="126"/>
        <end position="142"/>
    </location>
</feature>
<feature type="strand" evidence="10">
    <location>
        <begin position="143"/>
        <end position="145"/>
    </location>
</feature>
<feature type="strand" evidence="10">
    <location>
        <begin position="148"/>
        <end position="155"/>
    </location>
</feature>
<feature type="strand" evidence="10">
    <location>
        <begin position="160"/>
        <end position="163"/>
    </location>
</feature>
<feature type="strand" evidence="10">
    <location>
        <begin position="165"/>
        <end position="168"/>
    </location>
</feature>
<feature type="strand" evidence="10">
    <location>
        <begin position="170"/>
        <end position="177"/>
    </location>
</feature>
<feature type="strand" evidence="10">
    <location>
        <begin position="179"/>
        <end position="181"/>
    </location>
</feature>
<feature type="strand" evidence="10">
    <location>
        <begin position="189"/>
        <end position="191"/>
    </location>
</feature>
<feature type="turn" evidence="10">
    <location>
        <begin position="195"/>
        <end position="197"/>
    </location>
</feature>
<feature type="strand" evidence="10">
    <location>
        <begin position="199"/>
        <end position="201"/>
    </location>
</feature>
<feature type="strand" evidence="10">
    <location>
        <begin position="206"/>
        <end position="211"/>
    </location>
</feature>
<feature type="strand" evidence="10">
    <location>
        <begin position="213"/>
        <end position="219"/>
    </location>
</feature>
<feature type="strand" evidence="10">
    <location>
        <begin position="221"/>
        <end position="223"/>
    </location>
</feature>
<feature type="helix" evidence="10">
    <location>
        <begin position="229"/>
        <end position="231"/>
    </location>
</feature>
<feature type="strand" evidence="10">
    <location>
        <begin position="246"/>
        <end position="250"/>
    </location>
</feature>
<feature type="strand" evidence="10">
    <location>
        <begin position="254"/>
        <end position="260"/>
    </location>
</feature>
<feature type="strand" evidence="10">
    <location>
        <begin position="262"/>
        <end position="268"/>
    </location>
</feature>
<feature type="strand" evidence="8">
    <location>
        <begin position="271"/>
        <end position="273"/>
    </location>
</feature>
<feature type="helix" evidence="10">
    <location>
        <begin position="279"/>
        <end position="281"/>
    </location>
</feature>
<feature type="strand" evidence="10">
    <location>
        <begin position="287"/>
        <end position="291"/>
    </location>
</feature>
<feature type="strand" evidence="10">
    <location>
        <begin position="293"/>
        <end position="299"/>
    </location>
</feature>
<feature type="strand" evidence="10">
    <location>
        <begin position="301"/>
        <end position="306"/>
    </location>
</feature>
<feature type="strand" evidence="10">
    <location>
        <begin position="308"/>
        <end position="313"/>
    </location>
</feature>
<feature type="strand" evidence="10">
    <location>
        <begin position="315"/>
        <end position="317"/>
    </location>
</feature>
<feature type="strand" evidence="10">
    <location>
        <begin position="323"/>
        <end position="325"/>
    </location>
</feature>
<feature type="strand" evidence="10">
    <location>
        <begin position="330"/>
        <end position="333"/>
    </location>
</feature>
<feature type="strand" evidence="10">
    <location>
        <begin position="338"/>
        <end position="343"/>
    </location>
</feature>
<feature type="strand" evidence="10">
    <location>
        <begin position="345"/>
        <end position="347"/>
    </location>
</feature>
<feature type="helix" evidence="10">
    <location>
        <begin position="353"/>
        <end position="356"/>
    </location>
</feature>
<feature type="strand" evidence="10">
    <location>
        <begin position="357"/>
        <end position="359"/>
    </location>
</feature>
<feature type="strand" evidence="10">
    <location>
        <begin position="367"/>
        <end position="370"/>
    </location>
</feature>
<feature type="strand" evidence="9">
    <location>
        <begin position="376"/>
        <end position="378"/>
    </location>
</feature>
<feature type="helix" evidence="10">
    <location>
        <begin position="380"/>
        <end position="383"/>
    </location>
</feature>
<feature type="helix" evidence="10">
    <location>
        <begin position="403"/>
        <end position="405"/>
    </location>
</feature>
<feature type="helix" evidence="10">
    <location>
        <begin position="406"/>
        <end position="413"/>
    </location>
</feature>
<accession>P39116</accession>
<keyword id="KW-0002">3D-structure</keyword>
<keyword id="KW-0106">Calcium</keyword>
<keyword id="KW-0903">Direct protein sequencing</keyword>
<keyword id="KW-0456">Lyase</keyword>
<keyword id="KW-0479">Metal-binding</keyword>
<keyword id="KW-1185">Reference proteome</keyword>
<keyword id="KW-0964">Secreted</keyword>
<keyword id="KW-0732">Signal</keyword>
<name>PLY_BACSU</name>
<sequence length="420" mass="45498">MKKVMLATALFLGLTPAGANAADLGHQTLGSNDGWGAYSTGTTGGSKASSSNVYTVSNRNQLVSALGKETNTTPKIIYIKGTIDMNVDDNLKPLGLNDYKDPEYDLDKYLKAYDPSTWGKKEPSGTQEEARARSQKNQKARVMVDIPANTTIVGSGTNAKVVGGNFQIKSDNVIIRNIEFQDAYDYFPQWDPTDGSSGNWNSQYDNITINGGTHIWIDHCTFNDGSRPDSTSPKYYGRKYQHHDGQTDASNGANYITMSYNYYHDHDKSSIFGSSDSKTSDDGKLKITLHHNRYKNIVQRAPRVRFGQVHVYNNYYEGSTSSSSYPFSYAWGIGKSSKIYAQNNVIDVPGLSAAKTISVFSGGTALYDSGTLLNGTQINASAANGLSSSVGWTPSLHGSIDASANVKSNVINQAGAGKLN</sequence>
<comment type="function">
    <text>Produces unsaturated products from polygalacturonate.</text>
</comment>
<comment type="catalytic activity">
    <reaction>
        <text>Eliminative cleavage of (1-&gt;4)-alpha-D-galacturonan to give oligosaccharides with 4-deoxy-alpha-D-galact-4-enuronosyl groups at their non-reducing ends.</text>
        <dbReference type="EC" id="4.2.2.2"/>
    </reaction>
</comment>
<comment type="cofactor">
    <cofactor evidence="3">
        <name>Ca(2+)</name>
        <dbReference type="ChEBI" id="CHEBI:29108"/>
    </cofactor>
    <text evidence="3">Binds 1 Ca(2+) ion per subunit.</text>
</comment>
<comment type="biophysicochemical properties">
    <phDependence>
        <text>Optimum pH is 8.4.</text>
    </phDependence>
    <temperatureDependence>
        <text>Optimum temperature is 42 degrees Celsius.</text>
    </temperatureDependence>
</comment>
<comment type="pathway">
    <text>Glycan metabolism; pectin degradation; 2-dehydro-3-deoxy-D-gluconate from pectin: step 2/5.</text>
</comment>
<comment type="subunit">
    <text>Monomer.</text>
</comment>
<comment type="subcellular location">
    <subcellularLocation>
        <location evidence="2">Secreted</location>
    </subcellularLocation>
</comment>
<comment type="developmental stage">
    <text>Produced during the exponential death phase of growth, just before sporulation.</text>
</comment>
<comment type="induction">
    <text>Negatively regulated by TnrA under nitrogen-limited conditions.</text>
</comment>
<comment type="similarity">
    <text evidence="6">Belongs to the polysaccharide lyase 1 family.</text>
</comment>
<proteinExistence type="evidence at protein level"/>